<feature type="signal peptide" evidence="1">
    <location>
        <begin position="1"/>
        <end position="24"/>
    </location>
</feature>
<feature type="chain" id="PRO_0000324623" description="von Willebrand factor A domain-containing protein 3A">
    <location>
        <begin position="25"/>
        <end position="1184"/>
    </location>
</feature>
<feature type="domain" description="VWFA 1" evidence="2">
    <location>
        <begin position="511"/>
        <end position="708"/>
    </location>
</feature>
<feature type="domain" description="VWFA 2" evidence="2">
    <location>
        <begin position="959"/>
        <end position="1131"/>
    </location>
</feature>
<feature type="region of interest" description="Disordered" evidence="3">
    <location>
        <begin position="40"/>
        <end position="62"/>
    </location>
</feature>
<feature type="region of interest" description="Disordered" evidence="3">
    <location>
        <begin position="729"/>
        <end position="780"/>
    </location>
</feature>
<feature type="coiled-coil region" evidence="1">
    <location>
        <begin position="333"/>
        <end position="357"/>
    </location>
</feature>
<feature type="compositionally biased region" description="Polar residues" evidence="3">
    <location>
        <begin position="50"/>
        <end position="62"/>
    </location>
</feature>
<feature type="compositionally biased region" description="Basic and acidic residues" evidence="3">
    <location>
        <begin position="765"/>
        <end position="776"/>
    </location>
</feature>
<feature type="glycosylation site" description="N-linked (GlcNAc...) asparagine" evidence="1">
    <location>
        <position position="709"/>
    </location>
</feature>
<feature type="splice variant" id="VSP_032318" description="In isoform 3." evidence="5">
    <location>
        <begin position="1"/>
        <end position="922"/>
    </location>
</feature>
<feature type="splice variant" id="VSP_032319" description="In isoform 4." evidence="6">
    <location>
        <begin position="1"/>
        <end position="898"/>
    </location>
</feature>
<feature type="splice variant" id="VSP_032320" description="In isoform 2." evidence="5">
    <location>
        <begin position="7"/>
        <end position="382"/>
    </location>
</feature>
<feature type="splice variant" id="VSP_032321" description="In isoform 4." evidence="6">
    <original>KHCSIFPSVEIHGVVRHIQWTPREMEVYIRHLEKVLRRYVQRLQWLL</original>
    <variation>MEVYIRHLEKVLRRYVQRLQWLLSGPVLCSRTWYRQSMDRGVMMTAA</variation>
    <location>
        <begin position="899"/>
        <end position="945"/>
    </location>
</feature>
<feature type="sequence variant" id="VAR_059738" description="In dbSNP:rs1369695824.">
    <original>T</original>
    <variation>I</variation>
    <location>
        <position position="464"/>
    </location>
</feature>
<feature type="sequence variant" id="VAR_057020" description="In dbSNP:rs1105929." evidence="4">
    <original>T</original>
    <variation>I</variation>
    <location>
        <position position="657"/>
    </location>
</feature>
<feature type="sequence variant" id="VAR_057021" description="In dbSNP:rs16972517.">
    <original>Q</original>
    <variation>P</variation>
    <location>
        <position position="1165"/>
    </location>
</feature>
<feature type="sequence conflict" description="In Ref. 5; AAH38400." evidence="7" ref="5">
    <original>N</original>
    <variation>S</variation>
    <location>
        <position position="885"/>
    </location>
</feature>
<feature type="sequence conflict" description="In Ref. 1; AAQ62968, 2; BAC04176/BAC87526, 4; EAW50598 and 5; AAH38400/AAI09296." evidence="7" ref="1 2 4 5">
    <original>F</original>
    <variation>L</variation>
    <location>
        <position position="1005"/>
    </location>
</feature>
<dbReference type="EMBL" id="AY360464">
    <property type="protein sequence ID" value="AAQ62968.1"/>
    <property type="molecule type" value="mRNA"/>
</dbReference>
<dbReference type="EMBL" id="AK093467">
    <property type="protein sequence ID" value="BAC04176.1"/>
    <property type="molecule type" value="mRNA"/>
</dbReference>
<dbReference type="EMBL" id="AK128606">
    <property type="protein sequence ID" value="BAC87526.1"/>
    <property type="molecule type" value="mRNA"/>
</dbReference>
<dbReference type="EMBL" id="AC009019">
    <property type="status" value="NOT_ANNOTATED_CDS"/>
    <property type="molecule type" value="Genomic_DNA"/>
</dbReference>
<dbReference type="EMBL" id="CH471249">
    <property type="protein sequence ID" value="EAW50598.1"/>
    <property type="molecule type" value="Genomic_DNA"/>
</dbReference>
<dbReference type="EMBL" id="BC038400">
    <property type="protein sequence ID" value="AAH38400.1"/>
    <property type="molecule type" value="mRNA"/>
</dbReference>
<dbReference type="EMBL" id="BC109295">
    <property type="protein sequence ID" value="AAI09296.1"/>
    <property type="molecule type" value="mRNA"/>
</dbReference>
<dbReference type="CCDS" id="CCDS45441.1">
    <molecule id="A6NCI4-1"/>
</dbReference>
<dbReference type="RefSeq" id="NP_775886.3">
    <molecule id="A6NCI4-1"/>
    <property type="nucleotide sequence ID" value="NM_173615.4"/>
</dbReference>
<dbReference type="SMR" id="A6NCI4"/>
<dbReference type="BioGRID" id="126967">
    <property type="interactions" value="4"/>
</dbReference>
<dbReference type="FunCoup" id="A6NCI4">
    <property type="interactions" value="4"/>
</dbReference>
<dbReference type="IntAct" id="A6NCI4">
    <property type="interactions" value="1"/>
</dbReference>
<dbReference type="STRING" id="9606.ENSP00000374049"/>
<dbReference type="GlyCosmos" id="A6NCI4">
    <property type="glycosylation" value="1 site, No reported glycans"/>
</dbReference>
<dbReference type="GlyGen" id="A6NCI4">
    <property type="glycosylation" value="2 sites"/>
</dbReference>
<dbReference type="iPTMnet" id="A6NCI4"/>
<dbReference type="PhosphoSitePlus" id="A6NCI4"/>
<dbReference type="BioMuta" id="VWA3A"/>
<dbReference type="jPOST" id="A6NCI4"/>
<dbReference type="MassIVE" id="A6NCI4"/>
<dbReference type="PaxDb" id="9606-ENSP00000374049"/>
<dbReference type="PeptideAtlas" id="A6NCI4"/>
<dbReference type="ProteomicsDB" id="833">
    <molecule id="A6NCI4-1"/>
</dbReference>
<dbReference type="ProteomicsDB" id="834">
    <molecule id="A6NCI4-2"/>
</dbReference>
<dbReference type="ProteomicsDB" id="835">
    <molecule id="A6NCI4-3"/>
</dbReference>
<dbReference type="ProteomicsDB" id="836">
    <molecule id="A6NCI4-4"/>
</dbReference>
<dbReference type="Antibodypedia" id="51004">
    <property type="antibodies" value="34 antibodies from 10 providers"/>
</dbReference>
<dbReference type="DNASU" id="146177"/>
<dbReference type="Ensembl" id="ENST00000389398.10">
    <molecule id="A6NCI4-1"/>
    <property type="protein sequence ID" value="ENSP00000374049.5"/>
    <property type="gene ID" value="ENSG00000175267.15"/>
</dbReference>
<dbReference type="Ensembl" id="ENST00000563755.1">
    <molecule id="A6NCI4-4"/>
    <property type="protein sequence ID" value="ENSP00000456513.1"/>
    <property type="gene ID" value="ENSG00000175267.15"/>
</dbReference>
<dbReference type="GeneID" id="146177"/>
<dbReference type="KEGG" id="hsa:146177"/>
<dbReference type="MANE-Select" id="ENST00000389398.10">
    <property type="protein sequence ID" value="ENSP00000374049.5"/>
    <property type="RefSeq nucleotide sequence ID" value="NM_173615.5"/>
    <property type="RefSeq protein sequence ID" value="NP_775886.3"/>
</dbReference>
<dbReference type="UCSC" id="uc010bxe.2">
    <molecule id="A6NCI4-1"/>
    <property type="organism name" value="human"/>
</dbReference>
<dbReference type="AGR" id="HGNC:27088"/>
<dbReference type="CTD" id="146177"/>
<dbReference type="GeneCards" id="VWA3A"/>
<dbReference type="HGNC" id="HGNC:27088">
    <property type="gene designation" value="VWA3A"/>
</dbReference>
<dbReference type="HPA" id="ENSG00000175267">
    <property type="expression patterns" value="Tissue enhanced (choroid plexus, fallopian tube)"/>
</dbReference>
<dbReference type="MIM" id="621113">
    <property type="type" value="gene"/>
</dbReference>
<dbReference type="neXtProt" id="NX_A6NCI4"/>
<dbReference type="OpenTargets" id="ENSG00000175267"/>
<dbReference type="PharmGKB" id="PA162408933"/>
<dbReference type="VEuPathDB" id="HostDB:ENSG00000175267"/>
<dbReference type="eggNOG" id="ENOG502QTDG">
    <property type="taxonomic scope" value="Eukaryota"/>
</dbReference>
<dbReference type="GeneTree" id="ENSGT00940000159290"/>
<dbReference type="HOGENOM" id="CLU_008839_0_0_1"/>
<dbReference type="InParanoid" id="A6NCI4"/>
<dbReference type="OMA" id="PNCTHQK"/>
<dbReference type="OrthoDB" id="299997at2759"/>
<dbReference type="PAN-GO" id="A6NCI4">
    <property type="GO annotations" value="0 GO annotations based on evolutionary models"/>
</dbReference>
<dbReference type="PhylomeDB" id="A6NCI4"/>
<dbReference type="TreeFam" id="TF328978"/>
<dbReference type="PathwayCommons" id="A6NCI4"/>
<dbReference type="SignaLink" id="A6NCI4"/>
<dbReference type="BioGRID-ORCS" id="146177">
    <property type="hits" value="11 hits in 1151 CRISPR screens"/>
</dbReference>
<dbReference type="ChiTaRS" id="VWA3A">
    <property type="organism name" value="human"/>
</dbReference>
<dbReference type="GenomeRNAi" id="146177"/>
<dbReference type="Pharos" id="A6NCI4">
    <property type="development level" value="Tdark"/>
</dbReference>
<dbReference type="PRO" id="PR:A6NCI4"/>
<dbReference type="Proteomes" id="UP000005640">
    <property type="component" value="Chromosome 16"/>
</dbReference>
<dbReference type="RNAct" id="A6NCI4">
    <property type="molecule type" value="protein"/>
</dbReference>
<dbReference type="Bgee" id="ENSG00000175267">
    <property type="expression patterns" value="Expressed in right uterine tube and 145 other cell types or tissues"/>
</dbReference>
<dbReference type="ExpressionAtlas" id="A6NCI4">
    <property type="expression patterns" value="baseline and differential"/>
</dbReference>
<dbReference type="GO" id="GO:0005576">
    <property type="term" value="C:extracellular region"/>
    <property type="evidence" value="ECO:0007669"/>
    <property type="project" value="UniProtKB-SubCell"/>
</dbReference>
<dbReference type="Gene3D" id="3.40.50.410">
    <property type="entry name" value="von Willebrand factor, type A domain"/>
    <property type="match status" value="3"/>
</dbReference>
<dbReference type="InterPro" id="IPR002035">
    <property type="entry name" value="VWF_A"/>
</dbReference>
<dbReference type="InterPro" id="IPR036465">
    <property type="entry name" value="vWFA_dom_sf"/>
</dbReference>
<dbReference type="PANTHER" id="PTHR46478">
    <property type="entry name" value="VON WILLEBRAND FACTOR A DOMAIN-CONTAINING PROTEIN 3A"/>
    <property type="match status" value="1"/>
</dbReference>
<dbReference type="PANTHER" id="PTHR46478:SF1">
    <property type="entry name" value="VON WILLEBRAND FACTOR A DOMAIN-CONTAINING PROTEIN 3A"/>
    <property type="match status" value="1"/>
</dbReference>
<dbReference type="Pfam" id="PF13768">
    <property type="entry name" value="VWA_3"/>
    <property type="match status" value="3"/>
</dbReference>
<dbReference type="SMART" id="SM00327">
    <property type="entry name" value="VWA"/>
    <property type="match status" value="1"/>
</dbReference>
<dbReference type="SUPFAM" id="SSF53300">
    <property type="entry name" value="vWA-like"/>
    <property type="match status" value="3"/>
</dbReference>
<dbReference type="PROSITE" id="PS50234">
    <property type="entry name" value="VWFA"/>
    <property type="match status" value="1"/>
</dbReference>
<evidence type="ECO:0000255" key="1"/>
<evidence type="ECO:0000255" key="2">
    <source>
        <dbReference type="PROSITE-ProRule" id="PRU00219"/>
    </source>
</evidence>
<evidence type="ECO:0000256" key="3">
    <source>
        <dbReference type="SAM" id="MobiDB-lite"/>
    </source>
</evidence>
<evidence type="ECO:0000269" key="4">
    <source>
    </source>
</evidence>
<evidence type="ECO:0000303" key="5">
    <source>
    </source>
</evidence>
<evidence type="ECO:0000303" key="6">
    <source ref="1"/>
</evidence>
<evidence type="ECO:0000305" key="7"/>
<proteinExistence type="evidence at protein level"/>
<organism>
    <name type="scientific">Homo sapiens</name>
    <name type="common">Human</name>
    <dbReference type="NCBI Taxonomy" id="9606"/>
    <lineage>
        <taxon>Eukaryota</taxon>
        <taxon>Metazoa</taxon>
        <taxon>Chordata</taxon>
        <taxon>Craniata</taxon>
        <taxon>Vertebrata</taxon>
        <taxon>Euteleostomi</taxon>
        <taxon>Mammalia</taxon>
        <taxon>Eutheria</taxon>
        <taxon>Euarchontoglires</taxon>
        <taxon>Primates</taxon>
        <taxon>Haplorrhini</taxon>
        <taxon>Catarrhini</taxon>
        <taxon>Hominidae</taxon>
        <taxon>Homo</taxon>
    </lineage>
</organism>
<accession>A6NCI4</accession>
<accession>A4QMU8</accession>
<accession>A6NNC0</accession>
<accession>Q6UTX4</accession>
<accession>Q6ZQZ9</accession>
<accession>Q8IUY6</accession>
<accession>Q8N9W1</accession>
<keyword id="KW-0025">Alternative splicing</keyword>
<keyword id="KW-0175">Coiled coil</keyword>
<keyword id="KW-0325">Glycoprotein</keyword>
<keyword id="KW-1267">Proteomics identification</keyword>
<keyword id="KW-1185">Reference proteome</keyword>
<keyword id="KW-0677">Repeat</keyword>
<keyword id="KW-0964">Secreted</keyword>
<keyword id="KW-0732">Signal</keyword>
<comment type="subcellular location">
    <subcellularLocation>
        <location evidence="7">Secreted</location>
    </subcellularLocation>
</comment>
<comment type="alternative products">
    <event type="alternative splicing"/>
    <isoform>
        <id>A6NCI4-1</id>
        <name>1</name>
        <sequence type="displayed"/>
    </isoform>
    <isoform>
        <id>A6NCI4-2</id>
        <name>2</name>
        <sequence type="described" ref="VSP_032320"/>
    </isoform>
    <isoform>
        <id>A6NCI4-3</id>
        <name>3</name>
        <sequence type="described" ref="VSP_032318"/>
    </isoform>
    <isoform>
        <id>A6NCI4-4</id>
        <name>4</name>
        <sequence type="described" ref="VSP_032319 VSP_032321"/>
    </isoform>
</comment>
<protein>
    <recommendedName>
        <fullName>von Willebrand factor A domain-containing protein 3A</fullName>
    </recommendedName>
</protein>
<gene>
    <name type="primary">VWA3A</name>
</gene>
<sequence>MKKYRKISIGCFAMATQTSHVFHGQENMFLENHCIRRNTGRDSKKPLKQKNMNGLGQNSDNGLLVTHVNQTQDLLRLQGSETQSSDWEDSEDWLSAHSLKCQKLTLADLISQGTEVLEEGTNVVQKICFSTQIIRHFESKLSDTIEVYQERIQWLTENSKKAFGLIKGARVSILIDVSAISSGPQKEEFQKDLMSLIDEQLSHKEKLFVLSFGTNAGSLWPDPMEVSASTLQELKLWVKTLQPDGGSNLLQALKKIFTLKGLDSLVAIMRSCPDQPSEILSDYIQQSTMGRDLIIHFITYRCDDQMPPAVLKNLAEAVRGYYHCYSPKMEHYTSRDMDELLAEIQKAQSLLSHVQALQHSSPCEALTCTMEEISTEITNGPLISLLPKPPKHDAPLTIEFPNLDKTSAEWLKVNGLKAKKLSLYQVLAPNAFSPVEEFVPILQKTVSSTIHEKAMIQFEWHDGTVKNIHVDPPFLYKYQQQLSRAMRMYERRIEWLSLASRRIWGTVCEKRVVVLLDISATNSMYIIHIQHSLRLLLEEQLSNKDCFNLIAFGSTIESWRPEMVPVSHNNLQSAWRWALNLRCRGSRNVLSALRKAVEVDFKDKDKHQSQGIYLFTGGIPDQDMPTLSAYMAEACGGCDLQLNVCLFYVGEPKMDTTPPARYASHTDTAAAYKEVTRAAGGRFHWFGDTGIYESDDINSIMSEMEKALNYSQKCAFLMASLKNHSGKVLGSSALPKEKPKTLQLRSQPKKLCPPRPTVPLGARMSIKDDPDREKSPPLKSLKWRPLSSRVGISPAAAQPTKEGMMELRRKTKSREAETSLLLFYTEKGNDVGSVYKKYPQGRGLRRTSSSIDLPRKDTVCSSQEWVAKYGLKKLKLEISRCMGPNCTHQKSGQRSASAKHCSIFPSVEIHGVVRHIQWTPREMEVYIRHLEKVLRRYVQRLQWLLSGSRRLFGTVLESKVCILLDTSGSMGPYLQQVKTELVLLIWEQLRKCCDSFNLLSFAESFQSWQDTLVETTDAACHEAMQWVTHLQAQGSTSILQALLKAFSFHDLEGLYLLTDGKPDTSCSLVLNEVQKLREKRDVKVHTISLNCSDRAAVEFLRKLASFTGGRYHCPVGEDTLSKIHSLLTKGFINEKDPTLPPFEGDDLRILAQEITKARSFLWQAQSFRSQLQKKNDAEPKVTLS</sequence>
<name>VWA3A_HUMAN</name>
<reference key="1">
    <citation type="submission" date="2003-08" db="EMBL/GenBank/DDBJ databases">
        <authorList>
            <person name="Zhou G."/>
            <person name="Yu R."/>
            <person name="Li H."/>
            <person name="Ke R."/>
            <person name="Zheng G."/>
            <person name="Shen C."/>
            <person name="Zhong G."/>
            <person name="Lin L."/>
            <person name="Yang S."/>
        </authorList>
    </citation>
    <scope>NUCLEOTIDE SEQUENCE [MRNA] (ISOFORM 4)</scope>
</reference>
<reference key="2">
    <citation type="journal article" date="2004" name="Nat. Genet.">
        <title>Complete sequencing and characterization of 21,243 full-length human cDNAs.</title>
        <authorList>
            <person name="Ota T."/>
            <person name="Suzuki Y."/>
            <person name="Nishikawa T."/>
            <person name="Otsuki T."/>
            <person name="Sugiyama T."/>
            <person name="Irie R."/>
            <person name="Wakamatsu A."/>
            <person name="Hayashi K."/>
            <person name="Sato H."/>
            <person name="Nagai K."/>
            <person name="Kimura K."/>
            <person name="Makita H."/>
            <person name="Sekine M."/>
            <person name="Obayashi M."/>
            <person name="Nishi T."/>
            <person name="Shibahara T."/>
            <person name="Tanaka T."/>
            <person name="Ishii S."/>
            <person name="Yamamoto J."/>
            <person name="Saito K."/>
            <person name="Kawai Y."/>
            <person name="Isono Y."/>
            <person name="Nakamura Y."/>
            <person name="Nagahari K."/>
            <person name="Murakami K."/>
            <person name="Yasuda T."/>
            <person name="Iwayanagi T."/>
            <person name="Wagatsuma M."/>
            <person name="Shiratori A."/>
            <person name="Sudo H."/>
            <person name="Hosoiri T."/>
            <person name="Kaku Y."/>
            <person name="Kodaira H."/>
            <person name="Kondo H."/>
            <person name="Sugawara M."/>
            <person name="Takahashi M."/>
            <person name="Kanda K."/>
            <person name="Yokoi T."/>
            <person name="Furuya T."/>
            <person name="Kikkawa E."/>
            <person name="Omura Y."/>
            <person name="Abe K."/>
            <person name="Kamihara K."/>
            <person name="Katsuta N."/>
            <person name="Sato K."/>
            <person name="Tanikawa M."/>
            <person name="Yamazaki M."/>
            <person name="Ninomiya K."/>
            <person name="Ishibashi T."/>
            <person name="Yamashita H."/>
            <person name="Murakawa K."/>
            <person name="Fujimori K."/>
            <person name="Tanai H."/>
            <person name="Kimata M."/>
            <person name="Watanabe M."/>
            <person name="Hiraoka S."/>
            <person name="Chiba Y."/>
            <person name="Ishida S."/>
            <person name="Ono Y."/>
            <person name="Takiguchi S."/>
            <person name="Watanabe S."/>
            <person name="Yosida M."/>
            <person name="Hotuta T."/>
            <person name="Kusano J."/>
            <person name="Kanehori K."/>
            <person name="Takahashi-Fujii A."/>
            <person name="Hara H."/>
            <person name="Tanase T.-O."/>
            <person name="Nomura Y."/>
            <person name="Togiya S."/>
            <person name="Komai F."/>
            <person name="Hara R."/>
            <person name="Takeuchi K."/>
            <person name="Arita M."/>
            <person name="Imose N."/>
            <person name="Musashino K."/>
            <person name="Yuuki H."/>
            <person name="Oshima A."/>
            <person name="Sasaki N."/>
            <person name="Aotsuka S."/>
            <person name="Yoshikawa Y."/>
            <person name="Matsunawa H."/>
            <person name="Ichihara T."/>
            <person name="Shiohata N."/>
            <person name="Sano S."/>
            <person name="Moriya S."/>
            <person name="Momiyama H."/>
            <person name="Satoh N."/>
            <person name="Takami S."/>
            <person name="Terashima Y."/>
            <person name="Suzuki O."/>
            <person name="Nakagawa S."/>
            <person name="Senoh A."/>
            <person name="Mizoguchi H."/>
            <person name="Goto Y."/>
            <person name="Shimizu F."/>
            <person name="Wakebe H."/>
            <person name="Hishigaki H."/>
            <person name="Watanabe T."/>
            <person name="Sugiyama A."/>
            <person name="Takemoto M."/>
            <person name="Kawakami B."/>
            <person name="Yamazaki M."/>
            <person name="Watanabe K."/>
            <person name="Kumagai A."/>
            <person name="Itakura S."/>
            <person name="Fukuzumi Y."/>
            <person name="Fujimori Y."/>
            <person name="Komiyama M."/>
            <person name="Tashiro H."/>
            <person name="Tanigami A."/>
            <person name="Fujiwara T."/>
            <person name="Ono T."/>
            <person name="Yamada K."/>
            <person name="Fujii Y."/>
            <person name="Ozaki K."/>
            <person name="Hirao M."/>
            <person name="Ohmori Y."/>
            <person name="Kawabata A."/>
            <person name="Hikiji T."/>
            <person name="Kobatake N."/>
            <person name="Inagaki H."/>
            <person name="Ikema Y."/>
            <person name="Okamoto S."/>
            <person name="Okitani R."/>
            <person name="Kawakami T."/>
            <person name="Noguchi S."/>
            <person name="Itoh T."/>
            <person name="Shigeta K."/>
            <person name="Senba T."/>
            <person name="Matsumura K."/>
            <person name="Nakajima Y."/>
            <person name="Mizuno T."/>
            <person name="Morinaga M."/>
            <person name="Sasaki M."/>
            <person name="Togashi T."/>
            <person name="Oyama M."/>
            <person name="Hata H."/>
            <person name="Watanabe M."/>
            <person name="Komatsu T."/>
            <person name="Mizushima-Sugano J."/>
            <person name="Satoh T."/>
            <person name="Shirai Y."/>
            <person name="Takahashi Y."/>
            <person name="Nakagawa K."/>
            <person name="Okumura K."/>
            <person name="Nagase T."/>
            <person name="Nomura N."/>
            <person name="Kikuchi H."/>
            <person name="Masuho Y."/>
            <person name="Yamashita R."/>
            <person name="Nakai K."/>
            <person name="Yada T."/>
            <person name="Nakamura Y."/>
            <person name="Ohara O."/>
            <person name="Isogai T."/>
            <person name="Sugano S."/>
        </authorList>
    </citation>
    <scope>NUCLEOTIDE SEQUENCE [LARGE SCALE MRNA] (ISOFORMS 2 AND 3)</scope>
    <scope>VARIANT ILE-657</scope>
    <source>
        <tissue>Trachea</tissue>
    </source>
</reference>
<reference key="3">
    <citation type="journal article" date="2004" name="Nature">
        <title>The sequence and analysis of duplication-rich human chromosome 16.</title>
        <authorList>
            <person name="Martin J."/>
            <person name="Han C."/>
            <person name="Gordon L.A."/>
            <person name="Terry A."/>
            <person name="Prabhakar S."/>
            <person name="She X."/>
            <person name="Xie G."/>
            <person name="Hellsten U."/>
            <person name="Chan Y.M."/>
            <person name="Altherr M."/>
            <person name="Couronne O."/>
            <person name="Aerts A."/>
            <person name="Bajorek E."/>
            <person name="Black S."/>
            <person name="Blumer H."/>
            <person name="Branscomb E."/>
            <person name="Brown N.C."/>
            <person name="Bruno W.J."/>
            <person name="Buckingham J.M."/>
            <person name="Callen D.F."/>
            <person name="Campbell C.S."/>
            <person name="Campbell M.L."/>
            <person name="Campbell E.W."/>
            <person name="Caoile C."/>
            <person name="Challacombe J.F."/>
            <person name="Chasteen L.A."/>
            <person name="Chertkov O."/>
            <person name="Chi H.C."/>
            <person name="Christensen M."/>
            <person name="Clark L.M."/>
            <person name="Cohn J.D."/>
            <person name="Denys M."/>
            <person name="Detter J.C."/>
            <person name="Dickson M."/>
            <person name="Dimitrijevic-Bussod M."/>
            <person name="Escobar J."/>
            <person name="Fawcett J.J."/>
            <person name="Flowers D."/>
            <person name="Fotopulos D."/>
            <person name="Glavina T."/>
            <person name="Gomez M."/>
            <person name="Gonzales E."/>
            <person name="Goodstein D."/>
            <person name="Goodwin L.A."/>
            <person name="Grady D.L."/>
            <person name="Grigoriev I."/>
            <person name="Groza M."/>
            <person name="Hammon N."/>
            <person name="Hawkins T."/>
            <person name="Haydu L."/>
            <person name="Hildebrand C.E."/>
            <person name="Huang W."/>
            <person name="Israni S."/>
            <person name="Jett J."/>
            <person name="Jewett P.B."/>
            <person name="Kadner K."/>
            <person name="Kimball H."/>
            <person name="Kobayashi A."/>
            <person name="Krawczyk M.-C."/>
            <person name="Leyba T."/>
            <person name="Longmire J.L."/>
            <person name="Lopez F."/>
            <person name="Lou Y."/>
            <person name="Lowry S."/>
            <person name="Ludeman T."/>
            <person name="Manohar C.F."/>
            <person name="Mark G.A."/>
            <person name="McMurray K.L."/>
            <person name="Meincke L.J."/>
            <person name="Morgan J."/>
            <person name="Moyzis R.K."/>
            <person name="Mundt M.O."/>
            <person name="Munk A.C."/>
            <person name="Nandkeshwar R.D."/>
            <person name="Pitluck S."/>
            <person name="Pollard M."/>
            <person name="Predki P."/>
            <person name="Parson-Quintana B."/>
            <person name="Ramirez L."/>
            <person name="Rash S."/>
            <person name="Retterer J."/>
            <person name="Ricke D.O."/>
            <person name="Robinson D.L."/>
            <person name="Rodriguez A."/>
            <person name="Salamov A."/>
            <person name="Saunders E.H."/>
            <person name="Scott D."/>
            <person name="Shough T."/>
            <person name="Stallings R.L."/>
            <person name="Stalvey M."/>
            <person name="Sutherland R.D."/>
            <person name="Tapia R."/>
            <person name="Tesmer J.G."/>
            <person name="Thayer N."/>
            <person name="Thompson L.S."/>
            <person name="Tice H."/>
            <person name="Torney D.C."/>
            <person name="Tran-Gyamfi M."/>
            <person name="Tsai M."/>
            <person name="Ulanovsky L.E."/>
            <person name="Ustaszewska A."/>
            <person name="Vo N."/>
            <person name="White P.S."/>
            <person name="Williams A.L."/>
            <person name="Wills P.L."/>
            <person name="Wu J.-R."/>
            <person name="Wu K."/>
            <person name="Yang J."/>
            <person name="DeJong P."/>
            <person name="Bruce D."/>
            <person name="Doggett N.A."/>
            <person name="Deaven L."/>
            <person name="Schmutz J."/>
            <person name="Grimwood J."/>
            <person name="Richardson P."/>
            <person name="Rokhsar D.S."/>
            <person name="Eichler E.E."/>
            <person name="Gilna P."/>
            <person name="Lucas S.M."/>
            <person name="Myers R.M."/>
            <person name="Rubin E.M."/>
            <person name="Pennacchio L.A."/>
        </authorList>
    </citation>
    <scope>NUCLEOTIDE SEQUENCE [LARGE SCALE GENOMIC DNA]</scope>
</reference>
<reference key="4">
    <citation type="submission" date="2005-07" db="EMBL/GenBank/DDBJ databases">
        <authorList>
            <person name="Mural R.J."/>
            <person name="Istrail S."/>
            <person name="Sutton G.G."/>
            <person name="Florea L."/>
            <person name="Halpern A.L."/>
            <person name="Mobarry C.M."/>
            <person name="Lippert R."/>
            <person name="Walenz B."/>
            <person name="Shatkay H."/>
            <person name="Dew I."/>
            <person name="Miller J.R."/>
            <person name="Flanigan M.J."/>
            <person name="Edwards N.J."/>
            <person name="Bolanos R."/>
            <person name="Fasulo D."/>
            <person name="Halldorsson B.V."/>
            <person name="Hannenhalli S."/>
            <person name="Turner R."/>
            <person name="Yooseph S."/>
            <person name="Lu F."/>
            <person name="Nusskern D.R."/>
            <person name="Shue B.C."/>
            <person name="Zheng X.H."/>
            <person name="Zhong F."/>
            <person name="Delcher A.L."/>
            <person name="Huson D.H."/>
            <person name="Kravitz S.A."/>
            <person name="Mouchard L."/>
            <person name="Reinert K."/>
            <person name="Remington K.A."/>
            <person name="Clark A.G."/>
            <person name="Waterman M.S."/>
            <person name="Eichler E.E."/>
            <person name="Adams M.D."/>
            <person name="Hunkapiller M.W."/>
            <person name="Myers E.W."/>
            <person name="Venter J.C."/>
        </authorList>
    </citation>
    <scope>NUCLEOTIDE SEQUENCE [LARGE SCALE GENOMIC DNA]</scope>
</reference>
<reference key="5">
    <citation type="journal article" date="2004" name="Genome Res.">
        <title>The status, quality, and expansion of the NIH full-length cDNA project: the Mammalian Gene Collection (MGC).</title>
        <authorList>
            <consortium name="The MGC Project Team"/>
        </authorList>
    </citation>
    <scope>NUCLEOTIDE SEQUENCE [LARGE SCALE MRNA] OF 392-1184</scope>
    <source>
        <tissue>Brain</tissue>
    </source>
</reference>